<sequence>MTILFLFLLLFLLMFIGVPIAVSLGLSGALTILLFSPDSVRSLAIKLFETSEHYTLLAIPFFLLSGAFMTTGGVARRLIDFANACVGHIRGGLAIAAVLACMLFAALSGSSPATVAAVGSIAIAGMVRSGYPQAFGAGIVCNAGTLGILIPPSIVMVVYAAATETSVGKLFIAGVVPGLLLGLILMVVIYIVARVKKLPAMPRVSLREWLASARKALWGLLLMVIILGGIYSGAFTPTEAAAVAAVYSAFVALFVYRDMRLSECPKVLLESGKLTIMLMFIIANAMLFAHVLTTEQIPQSIASWVTELGLSPWMFLLVVNIVLLIAGNFMEPSAIILILAPIFFPIAMELGIDPIHLGIIMVVNMEIGLITPPVGLNLFVTSAVTGMPLGATIRAALPWLMILLVFLIIVTYIPAVSLALPNWLGMS</sequence>
<feature type="chain" id="PRO_0000435378" description="C4-dicarboxylate TRAP transporter large permease protein DctM">
    <location>
        <begin position="1"/>
        <end position="427"/>
    </location>
</feature>
<feature type="transmembrane region" description="Helical" evidence="2">
    <location>
        <begin position="2"/>
        <end position="22"/>
    </location>
</feature>
<feature type="transmembrane region" description="Helical" evidence="2">
    <location>
        <begin position="55"/>
        <end position="75"/>
    </location>
</feature>
<feature type="transmembrane region" description="Helical" evidence="2">
    <location>
        <begin position="91"/>
        <end position="111"/>
    </location>
</feature>
<feature type="transmembrane region" description="Helical" evidence="2">
    <location>
        <begin position="115"/>
        <end position="135"/>
    </location>
</feature>
<feature type="transmembrane region" description="Helical" evidence="2">
    <location>
        <begin position="138"/>
        <end position="158"/>
    </location>
</feature>
<feature type="transmembrane region" description="Helical" evidence="2">
    <location>
        <begin position="171"/>
        <end position="191"/>
    </location>
</feature>
<feature type="transmembrane region" description="Helical" evidence="2">
    <location>
        <begin position="216"/>
        <end position="236"/>
    </location>
</feature>
<feature type="transmembrane region" description="Helical" evidence="2">
    <location>
        <begin position="237"/>
        <end position="257"/>
    </location>
</feature>
<feature type="transmembrane region" description="Helical" evidence="2">
    <location>
        <begin position="274"/>
        <end position="294"/>
    </location>
</feature>
<feature type="transmembrane region" description="Helical" evidence="2">
    <location>
        <begin position="310"/>
        <end position="330"/>
    </location>
</feature>
<feature type="transmembrane region" description="Helical" evidence="2">
    <location>
        <begin position="335"/>
        <end position="355"/>
    </location>
</feature>
<feature type="transmembrane region" description="Helical" evidence="2">
    <location>
        <begin position="359"/>
        <end position="379"/>
    </location>
</feature>
<feature type="transmembrane region" description="Helical" evidence="2">
    <location>
        <begin position="396"/>
        <end position="416"/>
    </location>
</feature>
<name>DCTM_PSEAE</name>
<reference key="1">
    <citation type="journal article" date="2000" name="Nature">
        <title>Complete genome sequence of Pseudomonas aeruginosa PAO1, an opportunistic pathogen.</title>
        <authorList>
            <person name="Stover C.K."/>
            <person name="Pham X.-Q.T."/>
            <person name="Erwin A.L."/>
            <person name="Mizoguchi S.D."/>
            <person name="Warrener P."/>
            <person name="Hickey M.J."/>
            <person name="Brinkman F.S.L."/>
            <person name="Hufnagle W.O."/>
            <person name="Kowalik D.J."/>
            <person name="Lagrou M."/>
            <person name="Garber R.L."/>
            <person name="Goltry L."/>
            <person name="Tolentino E."/>
            <person name="Westbrock-Wadman S."/>
            <person name="Yuan Y."/>
            <person name="Brody L.L."/>
            <person name="Coulter S.N."/>
            <person name="Folger K.R."/>
            <person name="Kas A."/>
            <person name="Larbig K."/>
            <person name="Lim R.M."/>
            <person name="Smith K.A."/>
            <person name="Spencer D.H."/>
            <person name="Wong G.K.-S."/>
            <person name="Wu Z."/>
            <person name="Paulsen I.T."/>
            <person name="Reizer J."/>
            <person name="Saier M.H. Jr."/>
            <person name="Hancock R.E.W."/>
            <person name="Lory S."/>
            <person name="Olson M.V."/>
        </authorList>
    </citation>
    <scope>NUCLEOTIDE SEQUENCE [LARGE SCALE GENOMIC DNA]</scope>
    <source>
        <strain>ATCC 15692 / DSM 22644 / CIP 104116 / JCM 14847 / LMG 12228 / 1C / PRS 101 / PAO1</strain>
    </source>
</reference>
<reference key="2">
    <citation type="journal article" date="2011" name="J. Bacteriol.">
        <title>Identification of C(4)-dicarboxylate transport systems in Pseudomonas aeruginosa PAO1.</title>
        <authorList>
            <person name="Valentini M."/>
            <person name="Storelli N."/>
            <person name="Lapouge K."/>
        </authorList>
    </citation>
    <scope>FUNCTION</scope>
    <scope>SUBUNIT</scope>
    <scope>INDUCTION</scope>
    <scope>DISRUPTION PHENOTYPE</scope>
    <source>
        <strain>ATCC 15692 / DSM 22644 / CIP 104116 / JCM 14847 / LMG 12228 / 1C / PRS 101 / PAO1</strain>
    </source>
</reference>
<dbReference type="EMBL" id="AE004091">
    <property type="protein sequence ID" value="AAG08554.1"/>
    <property type="molecule type" value="Genomic_DNA"/>
</dbReference>
<dbReference type="PIR" id="B83001">
    <property type="entry name" value="B83001"/>
</dbReference>
<dbReference type="RefSeq" id="NP_253856.1">
    <property type="nucleotide sequence ID" value="NC_002516.2"/>
</dbReference>
<dbReference type="RefSeq" id="WP_003105529.1">
    <property type="nucleotide sequence ID" value="NZ_QZGE01000002.1"/>
</dbReference>
<dbReference type="SMR" id="Q9HU16"/>
<dbReference type="FunCoup" id="Q9HU16">
    <property type="interactions" value="193"/>
</dbReference>
<dbReference type="STRING" id="208964.PA5169"/>
<dbReference type="PaxDb" id="208964-PA5169"/>
<dbReference type="GeneID" id="877773"/>
<dbReference type="KEGG" id="pae:PA5169"/>
<dbReference type="PATRIC" id="fig|208964.12.peg.5417"/>
<dbReference type="PseudoCAP" id="PA5169"/>
<dbReference type="HOGENOM" id="CLU_019824_4_1_6"/>
<dbReference type="InParanoid" id="Q9HU16"/>
<dbReference type="OrthoDB" id="8627919at2"/>
<dbReference type="PhylomeDB" id="Q9HU16"/>
<dbReference type="BioCyc" id="PAER208964:G1FZ6-5286-MONOMER"/>
<dbReference type="Proteomes" id="UP000002438">
    <property type="component" value="Chromosome"/>
</dbReference>
<dbReference type="GO" id="GO:0005886">
    <property type="term" value="C:plasma membrane"/>
    <property type="evidence" value="ECO:0000318"/>
    <property type="project" value="GO_Central"/>
</dbReference>
<dbReference type="GO" id="GO:0022857">
    <property type="term" value="F:transmembrane transporter activity"/>
    <property type="evidence" value="ECO:0000318"/>
    <property type="project" value="GO_Central"/>
</dbReference>
<dbReference type="GO" id="GO:0015740">
    <property type="term" value="P:C4-dicarboxylate transport"/>
    <property type="evidence" value="ECO:0000315"/>
    <property type="project" value="PseudoCAP"/>
</dbReference>
<dbReference type="InterPro" id="IPR010656">
    <property type="entry name" value="DctM"/>
</dbReference>
<dbReference type="InterPro" id="IPR004681">
    <property type="entry name" value="TRAP_DctM"/>
</dbReference>
<dbReference type="NCBIfam" id="TIGR00786">
    <property type="entry name" value="dctM"/>
    <property type="match status" value="1"/>
</dbReference>
<dbReference type="PANTHER" id="PTHR33362:SF5">
    <property type="entry name" value="C4-DICARBOXYLATE TRAP TRANSPORTER LARGE PERMEASE PROTEIN DCTM"/>
    <property type="match status" value="1"/>
</dbReference>
<dbReference type="PANTHER" id="PTHR33362">
    <property type="entry name" value="SIALIC ACID TRAP TRANSPORTER PERMEASE PROTEIN SIAT-RELATED"/>
    <property type="match status" value="1"/>
</dbReference>
<dbReference type="Pfam" id="PF06808">
    <property type="entry name" value="DctM"/>
    <property type="match status" value="1"/>
</dbReference>
<dbReference type="PIRSF" id="PIRSF006066">
    <property type="entry name" value="HI0050"/>
    <property type="match status" value="1"/>
</dbReference>
<comment type="function">
    <text evidence="3">Part of the tripartite ATP-independent periplasmic (TRAP) transport system DctPQM involved in C4-dicarboxylates uptake.</text>
</comment>
<comment type="subunit">
    <text evidence="6">The complex comprises the extracytoplasmic solute receptor protein DctP, and the two transmembrane proteins DctQ and DctM.</text>
</comment>
<comment type="subcellular location">
    <subcellularLocation>
        <location evidence="1">Cell inner membrane</location>
        <topology evidence="2">Multi-pass membrane protein</topology>
    </subcellularLocation>
</comment>
<comment type="induction">
    <text evidence="3">Expression is maximal in early exponential growth phase and declines with cell density to reach a plateau in the stationary growth phase. Induced by the C(4)-dicarboxylates succinate, fumarate and malate. Positively regulated by RpoN and the DctB/DctD two-component system. Negatively regulated by DctA.</text>
</comment>
<comment type="disruption phenotype">
    <text evidence="3">The dctA-dctPQM double mutant shows no growth on malate and fumarate and residual growth on succinate.</text>
</comment>
<comment type="miscellaneous">
    <text evidence="3">The DctPQM carrier is more efficient than the DctA carrier for the utilization of succinate at micromolar concentrations, whereas DctA is the major transporter at millimolar concentrations.</text>
</comment>
<comment type="similarity">
    <text evidence="5">Belongs to the TRAP transporter large permease family.</text>
</comment>
<accession>Q9HU16</accession>
<keyword id="KW-0997">Cell inner membrane</keyword>
<keyword id="KW-1003">Cell membrane</keyword>
<keyword id="KW-0472">Membrane</keyword>
<keyword id="KW-1185">Reference proteome</keyword>
<keyword id="KW-0812">Transmembrane</keyword>
<keyword id="KW-1133">Transmembrane helix</keyword>
<keyword id="KW-0813">Transport</keyword>
<evidence type="ECO:0000250" key="1">
    <source>
        <dbReference type="UniProtKB" id="O07838"/>
    </source>
</evidence>
<evidence type="ECO:0000255" key="2"/>
<evidence type="ECO:0000269" key="3">
    <source>
    </source>
</evidence>
<evidence type="ECO:0000303" key="4">
    <source>
    </source>
</evidence>
<evidence type="ECO:0000305" key="5"/>
<evidence type="ECO:0000305" key="6">
    <source>
    </source>
</evidence>
<organism>
    <name type="scientific">Pseudomonas aeruginosa (strain ATCC 15692 / DSM 22644 / CIP 104116 / JCM 14847 / LMG 12228 / 1C / PRS 101 / PAO1)</name>
    <dbReference type="NCBI Taxonomy" id="208964"/>
    <lineage>
        <taxon>Bacteria</taxon>
        <taxon>Pseudomonadati</taxon>
        <taxon>Pseudomonadota</taxon>
        <taxon>Gammaproteobacteria</taxon>
        <taxon>Pseudomonadales</taxon>
        <taxon>Pseudomonadaceae</taxon>
        <taxon>Pseudomonas</taxon>
    </lineage>
</organism>
<protein>
    <recommendedName>
        <fullName evidence="5">C4-dicarboxylate TRAP transporter large permease protein DctM</fullName>
    </recommendedName>
</protein>
<proteinExistence type="evidence at protein level"/>
<gene>
    <name evidence="4" type="primary">dctM</name>
    <name type="ordered locus">PA5169</name>
</gene>